<proteinExistence type="inferred from homology"/>
<gene>
    <name evidence="1" type="primary">rplY</name>
    <name evidence="1" type="synonym">ctc</name>
    <name type="ordered locus">LMOf2365_0222</name>
</gene>
<evidence type="ECO:0000255" key="1">
    <source>
        <dbReference type="HAMAP-Rule" id="MF_01334"/>
    </source>
</evidence>
<evidence type="ECO:0000256" key="2">
    <source>
        <dbReference type="SAM" id="MobiDB-lite"/>
    </source>
</evidence>
<evidence type="ECO:0000305" key="3"/>
<comment type="function">
    <text evidence="1">This is one of the proteins that binds to the 5S RNA in the ribosome where it forms part of the central protuberance.</text>
</comment>
<comment type="subunit">
    <text evidence="1">Part of the 50S ribosomal subunit; part of the 5S rRNA/L5/L18/L25 subcomplex. Contacts the 5S rRNA. Binds to the 5S rRNA independently of L5 and L18.</text>
</comment>
<comment type="similarity">
    <text evidence="1">Belongs to the bacterial ribosomal protein bL25 family. CTC subfamily.</text>
</comment>
<sequence length="207" mass="22654">MATTLEVQKRETTQHSEVTRLRSEGKVPGIIYGYKSENVPVSVDSLELIKAVRDNGRNAVFSVTVDGKKLNVLLHEYQVDPLKDVLVHVDLLAVDMNEEVETDVRVVLVGDAPGVKAGGVLQQIIHDVKVSATPEKLPETIELDISSLEIGDVLTTNDLPENKDYVVQAEEEETVVTVSAPRAEEEPTTTEAPEPEAVHGKDEEPVE</sequence>
<name>RL25_LISMF</name>
<protein>
    <recommendedName>
        <fullName evidence="1">Large ribosomal subunit protein bL25</fullName>
    </recommendedName>
    <alternativeName>
        <fullName evidence="3">50S ribosomal protein L25</fullName>
    </alternativeName>
    <alternativeName>
        <fullName evidence="1">General stress protein CTC</fullName>
    </alternativeName>
</protein>
<dbReference type="EMBL" id="AE017262">
    <property type="protein sequence ID" value="AAT03009.1"/>
    <property type="molecule type" value="Genomic_DNA"/>
</dbReference>
<dbReference type="RefSeq" id="WP_003722740.1">
    <property type="nucleotide sequence ID" value="NC_002973.6"/>
</dbReference>
<dbReference type="SMR" id="Q724K2"/>
<dbReference type="KEGG" id="lmf:LMOf2365_0222"/>
<dbReference type="HOGENOM" id="CLU_075939_2_0_9"/>
<dbReference type="GO" id="GO:0022625">
    <property type="term" value="C:cytosolic large ribosomal subunit"/>
    <property type="evidence" value="ECO:0007669"/>
    <property type="project" value="TreeGrafter"/>
</dbReference>
<dbReference type="GO" id="GO:0008097">
    <property type="term" value="F:5S rRNA binding"/>
    <property type="evidence" value="ECO:0007669"/>
    <property type="project" value="InterPro"/>
</dbReference>
<dbReference type="GO" id="GO:0003735">
    <property type="term" value="F:structural constituent of ribosome"/>
    <property type="evidence" value="ECO:0007669"/>
    <property type="project" value="InterPro"/>
</dbReference>
<dbReference type="GO" id="GO:0006412">
    <property type="term" value="P:translation"/>
    <property type="evidence" value="ECO:0007669"/>
    <property type="project" value="UniProtKB-UniRule"/>
</dbReference>
<dbReference type="CDD" id="cd00495">
    <property type="entry name" value="Ribosomal_L25_TL5_CTC"/>
    <property type="match status" value="1"/>
</dbReference>
<dbReference type="FunFam" id="2.40.240.10:FF:000013">
    <property type="entry name" value="50S ribosomal protein L25"/>
    <property type="match status" value="1"/>
</dbReference>
<dbReference type="Gene3D" id="2.170.120.20">
    <property type="entry name" value="Ribosomal protein L25, beta domain"/>
    <property type="match status" value="1"/>
</dbReference>
<dbReference type="Gene3D" id="2.40.240.10">
    <property type="entry name" value="Ribosomal Protein L25, Chain P"/>
    <property type="match status" value="1"/>
</dbReference>
<dbReference type="HAMAP" id="MF_01334">
    <property type="entry name" value="Ribosomal_bL25_CTC"/>
    <property type="match status" value="1"/>
</dbReference>
<dbReference type="InterPro" id="IPR020056">
    <property type="entry name" value="Rbsml_bL25/Gln-tRNA_synth_N"/>
</dbReference>
<dbReference type="InterPro" id="IPR011035">
    <property type="entry name" value="Ribosomal_bL25/Gln-tRNA_synth"/>
</dbReference>
<dbReference type="InterPro" id="IPR020057">
    <property type="entry name" value="Ribosomal_bL25_b-dom"/>
</dbReference>
<dbReference type="InterPro" id="IPR037121">
    <property type="entry name" value="Ribosomal_bL25_C"/>
</dbReference>
<dbReference type="InterPro" id="IPR001021">
    <property type="entry name" value="Ribosomal_bL25_long"/>
</dbReference>
<dbReference type="InterPro" id="IPR029751">
    <property type="entry name" value="Ribosomal_L25_dom"/>
</dbReference>
<dbReference type="InterPro" id="IPR020930">
    <property type="entry name" value="Ribosomal_uL5_bac-type"/>
</dbReference>
<dbReference type="NCBIfam" id="TIGR00731">
    <property type="entry name" value="bL25_bact_ctc"/>
    <property type="match status" value="1"/>
</dbReference>
<dbReference type="NCBIfam" id="NF004133">
    <property type="entry name" value="PRK05618.2-4"/>
    <property type="match status" value="1"/>
</dbReference>
<dbReference type="PANTHER" id="PTHR33284">
    <property type="entry name" value="RIBOSOMAL PROTEIN L25/GLN-TRNA SYNTHETASE, ANTI-CODON-BINDING DOMAIN-CONTAINING PROTEIN"/>
    <property type="match status" value="1"/>
</dbReference>
<dbReference type="PANTHER" id="PTHR33284:SF1">
    <property type="entry name" value="RIBOSOMAL PROTEIN L25_GLN-TRNA SYNTHETASE, ANTI-CODON-BINDING DOMAIN-CONTAINING PROTEIN"/>
    <property type="match status" value="1"/>
</dbReference>
<dbReference type="Pfam" id="PF01386">
    <property type="entry name" value="Ribosomal_L25p"/>
    <property type="match status" value="1"/>
</dbReference>
<dbReference type="Pfam" id="PF14693">
    <property type="entry name" value="Ribosomal_TL5_C"/>
    <property type="match status" value="1"/>
</dbReference>
<dbReference type="SUPFAM" id="SSF50715">
    <property type="entry name" value="Ribosomal protein L25-like"/>
    <property type="match status" value="1"/>
</dbReference>
<accession>Q724K2</accession>
<organism>
    <name type="scientific">Listeria monocytogenes serotype 4b (strain F2365)</name>
    <dbReference type="NCBI Taxonomy" id="265669"/>
    <lineage>
        <taxon>Bacteria</taxon>
        <taxon>Bacillati</taxon>
        <taxon>Bacillota</taxon>
        <taxon>Bacilli</taxon>
        <taxon>Bacillales</taxon>
        <taxon>Listeriaceae</taxon>
        <taxon>Listeria</taxon>
    </lineage>
</organism>
<keyword id="KW-0687">Ribonucleoprotein</keyword>
<keyword id="KW-0689">Ribosomal protein</keyword>
<keyword id="KW-0694">RNA-binding</keyword>
<keyword id="KW-0699">rRNA-binding</keyword>
<feature type="chain" id="PRO_0000181564" description="Large ribosomal subunit protein bL25">
    <location>
        <begin position="1"/>
        <end position="207"/>
    </location>
</feature>
<feature type="region of interest" description="Disordered" evidence="2">
    <location>
        <begin position="171"/>
        <end position="207"/>
    </location>
</feature>
<feature type="compositionally biased region" description="Basic and acidic residues" evidence="2">
    <location>
        <begin position="196"/>
        <end position="207"/>
    </location>
</feature>
<reference key="1">
    <citation type="journal article" date="2004" name="Nucleic Acids Res.">
        <title>Whole genome comparisons of serotype 4b and 1/2a strains of the food-borne pathogen Listeria monocytogenes reveal new insights into the core genome components of this species.</title>
        <authorList>
            <person name="Nelson K.E."/>
            <person name="Fouts D.E."/>
            <person name="Mongodin E.F."/>
            <person name="Ravel J."/>
            <person name="DeBoy R.T."/>
            <person name="Kolonay J.F."/>
            <person name="Rasko D.A."/>
            <person name="Angiuoli S.V."/>
            <person name="Gill S.R."/>
            <person name="Paulsen I.T."/>
            <person name="Peterson J.D."/>
            <person name="White O."/>
            <person name="Nelson W.C."/>
            <person name="Nierman W.C."/>
            <person name="Beanan M.J."/>
            <person name="Brinkac L.M."/>
            <person name="Daugherty S.C."/>
            <person name="Dodson R.J."/>
            <person name="Durkin A.S."/>
            <person name="Madupu R."/>
            <person name="Haft D.H."/>
            <person name="Selengut J."/>
            <person name="Van Aken S.E."/>
            <person name="Khouri H.M."/>
            <person name="Fedorova N."/>
            <person name="Forberger H.A."/>
            <person name="Tran B."/>
            <person name="Kathariou S."/>
            <person name="Wonderling L.D."/>
            <person name="Uhlich G.A."/>
            <person name="Bayles D.O."/>
            <person name="Luchansky J.B."/>
            <person name="Fraser C.M."/>
        </authorList>
    </citation>
    <scope>NUCLEOTIDE SEQUENCE [LARGE SCALE GENOMIC DNA]</scope>
    <source>
        <strain>F2365</strain>
    </source>
</reference>